<name>OBG_CAMLR</name>
<dbReference type="EC" id="3.6.5.-" evidence="1"/>
<dbReference type="EMBL" id="CP000932">
    <property type="protein sequence ID" value="ACM63548.1"/>
    <property type="molecule type" value="Genomic_DNA"/>
</dbReference>
<dbReference type="RefSeq" id="WP_012660932.1">
    <property type="nucleotide sequence ID" value="NC_012039.1"/>
</dbReference>
<dbReference type="SMR" id="B9KER3"/>
<dbReference type="STRING" id="306263.Cla_0185"/>
<dbReference type="KEGG" id="cla:CLA_0185"/>
<dbReference type="PATRIC" id="fig|306263.5.peg.184"/>
<dbReference type="eggNOG" id="COG0536">
    <property type="taxonomic scope" value="Bacteria"/>
</dbReference>
<dbReference type="HOGENOM" id="CLU_011747_2_0_7"/>
<dbReference type="Proteomes" id="UP000007727">
    <property type="component" value="Chromosome"/>
</dbReference>
<dbReference type="GO" id="GO:0005737">
    <property type="term" value="C:cytoplasm"/>
    <property type="evidence" value="ECO:0007669"/>
    <property type="project" value="UniProtKB-SubCell"/>
</dbReference>
<dbReference type="GO" id="GO:0005525">
    <property type="term" value="F:GTP binding"/>
    <property type="evidence" value="ECO:0007669"/>
    <property type="project" value="UniProtKB-UniRule"/>
</dbReference>
<dbReference type="GO" id="GO:0003924">
    <property type="term" value="F:GTPase activity"/>
    <property type="evidence" value="ECO:0007669"/>
    <property type="project" value="UniProtKB-UniRule"/>
</dbReference>
<dbReference type="GO" id="GO:0000287">
    <property type="term" value="F:magnesium ion binding"/>
    <property type="evidence" value="ECO:0007669"/>
    <property type="project" value="InterPro"/>
</dbReference>
<dbReference type="GO" id="GO:0042254">
    <property type="term" value="P:ribosome biogenesis"/>
    <property type="evidence" value="ECO:0007669"/>
    <property type="project" value="UniProtKB-UniRule"/>
</dbReference>
<dbReference type="CDD" id="cd01898">
    <property type="entry name" value="Obg"/>
    <property type="match status" value="1"/>
</dbReference>
<dbReference type="FunFam" id="2.70.210.12:FF:000001">
    <property type="entry name" value="GTPase Obg"/>
    <property type="match status" value="1"/>
</dbReference>
<dbReference type="Gene3D" id="2.70.210.12">
    <property type="entry name" value="GTP1/OBG domain"/>
    <property type="match status" value="1"/>
</dbReference>
<dbReference type="Gene3D" id="3.40.50.300">
    <property type="entry name" value="P-loop containing nucleotide triphosphate hydrolases"/>
    <property type="match status" value="1"/>
</dbReference>
<dbReference type="HAMAP" id="MF_01454">
    <property type="entry name" value="GTPase_Obg"/>
    <property type="match status" value="1"/>
</dbReference>
<dbReference type="InterPro" id="IPR031167">
    <property type="entry name" value="G_OBG"/>
</dbReference>
<dbReference type="InterPro" id="IPR006073">
    <property type="entry name" value="GTP-bd"/>
</dbReference>
<dbReference type="InterPro" id="IPR014100">
    <property type="entry name" value="GTP-bd_Obg/CgtA"/>
</dbReference>
<dbReference type="InterPro" id="IPR006074">
    <property type="entry name" value="GTP1-OBG_CS"/>
</dbReference>
<dbReference type="InterPro" id="IPR006169">
    <property type="entry name" value="GTP1_OBG_dom"/>
</dbReference>
<dbReference type="InterPro" id="IPR036726">
    <property type="entry name" value="GTP1_OBG_dom_sf"/>
</dbReference>
<dbReference type="InterPro" id="IPR045086">
    <property type="entry name" value="OBG_GTPase"/>
</dbReference>
<dbReference type="InterPro" id="IPR027417">
    <property type="entry name" value="P-loop_NTPase"/>
</dbReference>
<dbReference type="NCBIfam" id="TIGR02729">
    <property type="entry name" value="Obg_CgtA"/>
    <property type="match status" value="1"/>
</dbReference>
<dbReference type="NCBIfam" id="NF008955">
    <property type="entry name" value="PRK12297.1"/>
    <property type="match status" value="1"/>
</dbReference>
<dbReference type="NCBIfam" id="NF008956">
    <property type="entry name" value="PRK12299.1"/>
    <property type="match status" value="1"/>
</dbReference>
<dbReference type="PANTHER" id="PTHR11702">
    <property type="entry name" value="DEVELOPMENTALLY REGULATED GTP-BINDING PROTEIN-RELATED"/>
    <property type="match status" value="1"/>
</dbReference>
<dbReference type="PANTHER" id="PTHR11702:SF31">
    <property type="entry name" value="MITOCHONDRIAL RIBOSOME-ASSOCIATED GTPASE 2"/>
    <property type="match status" value="1"/>
</dbReference>
<dbReference type="Pfam" id="PF01018">
    <property type="entry name" value="GTP1_OBG"/>
    <property type="match status" value="1"/>
</dbReference>
<dbReference type="Pfam" id="PF01926">
    <property type="entry name" value="MMR_HSR1"/>
    <property type="match status" value="1"/>
</dbReference>
<dbReference type="PIRSF" id="PIRSF002401">
    <property type="entry name" value="GTP_bd_Obg/CgtA"/>
    <property type="match status" value="1"/>
</dbReference>
<dbReference type="PRINTS" id="PR00326">
    <property type="entry name" value="GTP1OBG"/>
</dbReference>
<dbReference type="SUPFAM" id="SSF82051">
    <property type="entry name" value="Obg GTP-binding protein N-terminal domain"/>
    <property type="match status" value="1"/>
</dbReference>
<dbReference type="SUPFAM" id="SSF52540">
    <property type="entry name" value="P-loop containing nucleoside triphosphate hydrolases"/>
    <property type="match status" value="1"/>
</dbReference>
<dbReference type="PROSITE" id="PS51710">
    <property type="entry name" value="G_OBG"/>
    <property type="match status" value="1"/>
</dbReference>
<dbReference type="PROSITE" id="PS00905">
    <property type="entry name" value="GTP1_OBG"/>
    <property type="match status" value="1"/>
</dbReference>
<dbReference type="PROSITE" id="PS51883">
    <property type="entry name" value="OBG"/>
    <property type="match status" value="1"/>
</dbReference>
<reference key="1">
    <citation type="journal article" date="2008" name="Foodborne Pathog. Dis.">
        <title>The complete genome sequence and analysis of the human pathogen Campylobacter lari.</title>
        <authorList>
            <person name="Miller W.G."/>
            <person name="Wang G."/>
            <person name="Binnewies T.T."/>
            <person name="Parker C.T."/>
        </authorList>
    </citation>
    <scope>NUCLEOTIDE SEQUENCE [LARGE SCALE GENOMIC DNA]</scope>
    <source>
        <strain>RM2100 / D67 / ATCC BAA-1060</strain>
    </source>
</reference>
<evidence type="ECO:0000255" key="1">
    <source>
        <dbReference type="HAMAP-Rule" id="MF_01454"/>
    </source>
</evidence>
<evidence type="ECO:0000255" key="2">
    <source>
        <dbReference type="PROSITE-ProRule" id="PRU01231"/>
    </source>
</evidence>
<accession>B9KER3</accession>
<protein>
    <recommendedName>
        <fullName evidence="1">GTPase Obg</fullName>
        <ecNumber evidence="1">3.6.5.-</ecNumber>
    </recommendedName>
    <alternativeName>
        <fullName evidence="1">GTP-binding protein Obg</fullName>
    </alternativeName>
</protein>
<feature type="chain" id="PRO_0000385807" description="GTPase Obg">
    <location>
        <begin position="1"/>
        <end position="347"/>
    </location>
</feature>
<feature type="domain" description="Obg" evidence="2">
    <location>
        <begin position="1"/>
        <end position="158"/>
    </location>
</feature>
<feature type="domain" description="OBG-type G" evidence="1">
    <location>
        <begin position="159"/>
        <end position="339"/>
    </location>
</feature>
<feature type="binding site" evidence="1">
    <location>
        <begin position="165"/>
        <end position="172"/>
    </location>
    <ligand>
        <name>GTP</name>
        <dbReference type="ChEBI" id="CHEBI:37565"/>
    </ligand>
</feature>
<feature type="binding site" evidence="1">
    <location>
        <position position="172"/>
    </location>
    <ligand>
        <name>Mg(2+)</name>
        <dbReference type="ChEBI" id="CHEBI:18420"/>
    </ligand>
</feature>
<feature type="binding site" evidence="1">
    <location>
        <begin position="190"/>
        <end position="194"/>
    </location>
    <ligand>
        <name>GTP</name>
        <dbReference type="ChEBI" id="CHEBI:37565"/>
    </ligand>
</feature>
<feature type="binding site" evidence="1">
    <location>
        <position position="192"/>
    </location>
    <ligand>
        <name>Mg(2+)</name>
        <dbReference type="ChEBI" id="CHEBI:18420"/>
    </ligand>
</feature>
<feature type="binding site" evidence="1">
    <location>
        <begin position="212"/>
        <end position="215"/>
    </location>
    <ligand>
        <name>GTP</name>
        <dbReference type="ChEBI" id="CHEBI:37565"/>
    </ligand>
</feature>
<feature type="binding site" evidence="1">
    <location>
        <begin position="280"/>
        <end position="283"/>
    </location>
    <ligand>
        <name>GTP</name>
        <dbReference type="ChEBI" id="CHEBI:37565"/>
    </ligand>
</feature>
<feature type="binding site" evidence="1">
    <location>
        <begin position="320"/>
        <end position="322"/>
    </location>
    <ligand>
        <name>GTP</name>
        <dbReference type="ChEBI" id="CHEBI:37565"/>
    </ligand>
</feature>
<gene>
    <name evidence="1" type="primary">obg</name>
    <name type="ordered locus">Cla_0185</name>
</gene>
<organism>
    <name type="scientific">Campylobacter lari (strain RM2100 / D67 / ATCC BAA-1060)</name>
    <dbReference type="NCBI Taxonomy" id="306263"/>
    <lineage>
        <taxon>Bacteria</taxon>
        <taxon>Pseudomonadati</taxon>
        <taxon>Campylobacterota</taxon>
        <taxon>Epsilonproteobacteria</taxon>
        <taxon>Campylobacterales</taxon>
        <taxon>Campylobacteraceae</taxon>
        <taxon>Campylobacter</taxon>
    </lineage>
</organism>
<sequence length="347" mass="38184">MFIDNVKLVLSSGNGGKGAVSFRREKHVPLGGPDGGDGGNGGDVYFICDNNTHTLAHFKGKKELKAQNGQPGLGRNKNGKRGESLELIVPQGTQVIDAQSGEVLLDMLVEGQKELFLKGGKGGLGNTHFKNSTNQRPDYAQSGVAGKTLSVRLELKLIADVGLVGFPNVGKSTLISVVSNARPEIANYEFTTLTPKLGMVEVDDYNSFVMADIPGIIEGASDGRGLGLEFLRHIERTSFLLFVLDPLRDMSLKEQFCILRKELEKFSSKLYTRNFGLMLSKSDSINLGEEFAQKMEDDYNELKAYLQSQNNPQSFFIKVSSLEKTGLKELKFMLLEEVKKIRNQNNL</sequence>
<keyword id="KW-0963">Cytoplasm</keyword>
<keyword id="KW-0342">GTP-binding</keyword>
<keyword id="KW-0378">Hydrolase</keyword>
<keyword id="KW-0460">Magnesium</keyword>
<keyword id="KW-0479">Metal-binding</keyword>
<keyword id="KW-0547">Nucleotide-binding</keyword>
<keyword id="KW-1185">Reference proteome</keyword>
<comment type="function">
    <text evidence="1">An essential GTPase which binds GTP, GDP and possibly (p)ppGpp with moderate affinity, with high nucleotide exchange rates and a fairly low GTP hydrolysis rate. Plays a role in control of the cell cycle, stress response, ribosome biogenesis and in those bacteria that undergo differentiation, in morphogenesis control.</text>
</comment>
<comment type="cofactor">
    <cofactor evidence="1">
        <name>Mg(2+)</name>
        <dbReference type="ChEBI" id="CHEBI:18420"/>
    </cofactor>
</comment>
<comment type="subunit">
    <text evidence="1">Monomer.</text>
</comment>
<comment type="subcellular location">
    <subcellularLocation>
        <location evidence="1">Cytoplasm</location>
    </subcellularLocation>
</comment>
<comment type="similarity">
    <text evidence="1">Belongs to the TRAFAC class OBG-HflX-like GTPase superfamily. OBG GTPase family.</text>
</comment>
<proteinExistence type="inferred from homology"/>